<sequence length="1500" mass="169130">MEKVWESGRRMSRSIGRGMGMEAWGVDEAFMPQNSGGGGGSRGRRRSGRGGTADDDEEALRWAAIERLPTYSRMRTAILSSAEEEAAAAAAGAGKQQYKEVDVRRLGVGERQEFIERVFRVAEEDNQRFLQKLRNRIDRVGIELPTVEVRFEELMVQARCHVGSRALPTLLNTARNIAEAALGLVGVRPGRQATLTILRGVSGAVRPSRMTLLLGPPSSGKTTLLLALAGKLDPSLRRGGEVTYNGFELEEFVAQKTAAYISQTDVHVGEMTVKETLDFSARCQGVGTKYDLLTELARREKEAGIRPEPEVDLFMKATSMEGVESSLQTDYTLRILGLDICADTIVGDQMQRGISGGQKKRVTTGEMIVGPTKVLFMDEISTGLDSSTTFQIVKCLQQIVHLGEATILMSLLQPAPETFELFDDIILLSEGQIVYQGPREYVLEFFESCGFRCPERKGTADFLQEVTSKKDQEQYWADKHRPYRYISVSEFAQRFKRFHVGLQLENHLSVPFDKTRSHQAALVFSKQSVSTTELLKASFAKEWLLIKRNSFVYIFKTIQLIIVALVASTVFLRTQMHTRNLDDGFVYIGALLFSLIVNMFNGFAELSLTITRLPVFFKHRDLLFYPAWIFTLPNVILRIPFSIIESIVWVIVTYYTIGFAPEADRFFKQLLLVFLIQQMAGGLFRATAGLCRSMIIAQTGGALALLIFFVLGGFLLPKAFIPKWWIWGYWVSPLMYGYNALAVNEFYSPRWMNKFVLDNNGVPKRLGIALMEGANIFTDKNWFWIGAAGLLGFTMFFNVLFTLSLVYLNPLGKPQAVISEETAKEAEGNGDARHTVRNGSTKSNGGNHKEMREMRLSARLSNSSSNGVSRLMSIGSNEAGPRRGMVLPFTPLSMSFDDVNYYVDMPAEMKQQGVVDDRLQLLRDVTGSFRPAVLTALMGVSGAGKTTLMDVLAGRKTGGYIEGDMRISGYPKNQETFARISGYCEQNDIHSPQVTVRESLIYSAFLRLPEKIGDQEITDDIKIQFVDEVMELVELDNLKDALVGLPGITGLSTEQRKRLTIAVELVANPSIIFMDEPTSGLDARAAAIVMRTVRNTVDTGRTVVCTIHQPSIDIFEAFDELLLLKRGGQVIYSGQLGRNSQKMIEYFEAIPGVPKIKDKYNPATWMLEVSSVAAEVRLNMDFAEYYKTSDLYKQNKVLVNQLSQPEPGTSDLHFPTKYSQSTIGQFRACLWKQWLTYWRSPDYNLVRFSFTLFTALLLGTIFWKIGTKMGNANSLRMVIGAMYTAVMFIGINNCATVQPIVSIERTVFYRERAAGMYSAMPYAIAQVVMEIPYVFVQTAYYTLIVYAMMSFQWTAAKFFWFFFVSYFSFLYFTYYGMMTVAISPNHEVAAIFAAAFYSLFNLFSGFFIPRPRIPKWWIWYYWLCPLAWTVYGLIVTQYGDLEQIISVPGQSNQTISYYVTHHFGYHRKFMPVVAPVLVLFAVFFAFMYAICIKKLNFQHR</sequence>
<keyword id="KW-0025">Alternative splicing</keyword>
<keyword id="KW-0067">ATP-binding</keyword>
<keyword id="KW-0472">Membrane</keyword>
<keyword id="KW-0547">Nucleotide-binding</keyword>
<keyword id="KW-1185">Reference proteome</keyword>
<keyword id="KW-0677">Repeat</keyword>
<keyword id="KW-0812">Transmembrane</keyword>
<keyword id="KW-1133">Transmembrane helix</keyword>
<keyword id="KW-0813">Transport</keyword>
<organism>
    <name type="scientific">Oryza sativa subsp. japonica</name>
    <name type="common">Rice</name>
    <dbReference type="NCBI Taxonomy" id="39947"/>
    <lineage>
        <taxon>Eukaryota</taxon>
        <taxon>Viridiplantae</taxon>
        <taxon>Streptophyta</taxon>
        <taxon>Embryophyta</taxon>
        <taxon>Tracheophyta</taxon>
        <taxon>Spermatophyta</taxon>
        <taxon>Magnoliopsida</taxon>
        <taxon>Liliopsida</taxon>
        <taxon>Poales</taxon>
        <taxon>Poaceae</taxon>
        <taxon>BOP clade</taxon>
        <taxon>Oryzoideae</taxon>
        <taxon>Oryzeae</taxon>
        <taxon>Oryzinae</taxon>
        <taxon>Oryza</taxon>
        <taxon>Oryza sativa</taxon>
    </lineage>
</organism>
<protein>
    <recommendedName>
        <fullName evidence="8">ABC transporter G family member 42</fullName>
        <shortName evidence="8">OsABCG42</shortName>
    </recommendedName>
    <alternativeName>
        <fullName evidence="5 7">Pleiotropic drug resistance protein 12</fullName>
        <shortName evidence="7">OsPDR12</shortName>
    </alternativeName>
</protein>
<name>AB42G_ORYSJ</name>
<evidence type="ECO:0000250" key="1"/>
<evidence type="ECO:0000255" key="2"/>
<evidence type="ECO:0000255" key="3">
    <source>
        <dbReference type="PROSITE-ProRule" id="PRU00434"/>
    </source>
</evidence>
<evidence type="ECO:0000256" key="4">
    <source>
        <dbReference type="SAM" id="MobiDB-lite"/>
    </source>
</evidence>
<evidence type="ECO:0000303" key="5">
    <source>
    </source>
</evidence>
<evidence type="ECO:0000303" key="6">
    <source>
    </source>
</evidence>
<evidence type="ECO:0000303" key="7">
    <source>
    </source>
</evidence>
<evidence type="ECO:0000303" key="8">
    <source>
    </source>
</evidence>
<evidence type="ECO:0000305" key="9"/>
<evidence type="ECO:0000312" key="10">
    <source>
        <dbReference type="EMBL" id="BAD53545.1"/>
    </source>
</evidence>
<evidence type="ECO:0000312" key="11">
    <source>
        <dbReference type="EMBL" id="BAD53546.1"/>
    </source>
</evidence>
<evidence type="ECO:0000312" key="12">
    <source>
        <dbReference type="EMBL" id="BAF19764.1"/>
    </source>
</evidence>
<dbReference type="EMBL" id="AJ535043">
    <property type="protein sequence ID" value="CAD59565.1"/>
    <property type="molecule type" value="Genomic_DNA"/>
</dbReference>
<dbReference type="EMBL" id="AP003613">
    <property type="protein sequence ID" value="BAD53545.1"/>
    <property type="molecule type" value="Genomic_DNA"/>
</dbReference>
<dbReference type="EMBL" id="AP003613">
    <property type="protein sequence ID" value="BAD53546.1"/>
    <property type="molecule type" value="Genomic_DNA"/>
</dbReference>
<dbReference type="EMBL" id="AP008212">
    <property type="protein sequence ID" value="BAF19764.1"/>
    <property type="molecule type" value="Genomic_DNA"/>
</dbReference>
<dbReference type="EMBL" id="AP014962">
    <property type="protein sequence ID" value="BAS98215.1"/>
    <property type="molecule type" value="Genomic_DNA"/>
</dbReference>
<dbReference type="EMBL" id="AK121182">
    <property type="protein sequence ID" value="BAH00354.1"/>
    <property type="molecule type" value="mRNA"/>
</dbReference>
<dbReference type="SMR" id="Q5Z9S8"/>
<dbReference type="FunCoup" id="Q5Z9S8">
    <property type="interactions" value="155"/>
</dbReference>
<dbReference type="STRING" id="39947.Q5Z9S8"/>
<dbReference type="PaxDb" id="39947-Q5Z9S8"/>
<dbReference type="KEGG" id="dosa:Os06g0554800"/>
<dbReference type="eggNOG" id="KOG0065">
    <property type="taxonomic scope" value="Eukaryota"/>
</dbReference>
<dbReference type="InParanoid" id="Q5Z9S8"/>
<dbReference type="OMA" id="RMNLINP"/>
<dbReference type="Proteomes" id="UP000000763">
    <property type="component" value="Chromosome 6"/>
</dbReference>
<dbReference type="Proteomes" id="UP000059680">
    <property type="component" value="Chromosome 6"/>
</dbReference>
<dbReference type="GO" id="GO:0016020">
    <property type="term" value="C:membrane"/>
    <property type="evidence" value="ECO:0007669"/>
    <property type="project" value="UniProtKB-SubCell"/>
</dbReference>
<dbReference type="GO" id="GO:0140359">
    <property type="term" value="F:ABC-type transporter activity"/>
    <property type="evidence" value="ECO:0007669"/>
    <property type="project" value="InterPro"/>
</dbReference>
<dbReference type="GO" id="GO:0005524">
    <property type="term" value="F:ATP binding"/>
    <property type="evidence" value="ECO:0007669"/>
    <property type="project" value="UniProtKB-KW"/>
</dbReference>
<dbReference type="GO" id="GO:0016887">
    <property type="term" value="F:ATP hydrolysis activity"/>
    <property type="evidence" value="ECO:0007669"/>
    <property type="project" value="InterPro"/>
</dbReference>
<dbReference type="CDD" id="cd03232">
    <property type="entry name" value="ABCG_PDR_domain2"/>
    <property type="match status" value="1"/>
</dbReference>
<dbReference type="FunFam" id="3.40.50.300:FF:000179">
    <property type="entry name" value="ABC transporter G family member 34"/>
    <property type="match status" value="1"/>
</dbReference>
<dbReference type="FunFam" id="3.40.50.300:FF:000059">
    <property type="entry name" value="ABC transporter G family member 40"/>
    <property type="match status" value="1"/>
</dbReference>
<dbReference type="Gene3D" id="3.40.50.300">
    <property type="entry name" value="P-loop containing nucleotide triphosphate hydrolases"/>
    <property type="match status" value="2"/>
</dbReference>
<dbReference type="InterPro" id="IPR003593">
    <property type="entry name" value="AAA+_ATPase"/>
</dbReference>
<dbReference type="InterPro" id="IPR013525">
    <property type="entry name" value="ABC2_TM"/>
</dbReference>
<dbReference type="InterPro" id="IPR029481">
    <property type="entry name" value="ABC_trans_N"/>
</dbReference>
<dbReference type="InterPro" id="IPR003439">
    <property type="entry name" value="ABC_transporter-like_ATP-bd"/>
</dbReference>
<dbReference type="InterPro" id="IPR043926">
    <property type="entry name" value="ABCG_dom"/>
</dbReference>
<dbReference type="InterPro" id="IPR034003">
    <property type="entry name" value="ABCG_PDR_2"/>
</dbReference>
<dbReference type="InterPro" id="IPR027417">
    <property type="entry name" value="P-loop_NTPase"/>
</dbReference>
<dbReference type="InterPro" id="IPR013581">
    <property type="entry name" value="PDR_assoc"/>
</dbReference>
<dbReference type="PANTHER" id="PTHR48040:SF28">
    <property type="entry name" value="ABC TRANSPORTER G FAMILY MEMBER 39-LIKE"/>
    <property type="match status" value="1"/>
</dbReference>
<dbReference type="PANTHER" id="PTHR48040">
    <property type="entry name" value="PLEIOTROPIC DRUG RESISTANCE PROTEIN 1-LIKE ISOFORM X1"/>
    <property type="match status" value="1"/>
</dbReference>
<dbReference type="Pfam" id="PF01061">
    <property type="entry name" value="ABC2_membrane"/>
    <property type="match status" value="2"/>
</dbReference>
<dbReference type="Pfam" id="PF19055">
    <property type="entry name" value="ABC2_membrane_7"/>
    <property type="match status" value="2"/>
</dbReference>
<dbReference type="Pfam" id="PF00005">
    <property type="entry name" value="ABC_tran"/>
    <property type="match status" value="2"/>
</dbReference>
<dbReference type="Pfam" id="PF14510">
    <property type="entry name" value="ABC_trans_N"/>
    <property type="match status" value="1"/>
</dbReference>
<dbReference type="Pfam" id="PF08370">
    <property type="entry name" value="PDR_assoc"/>
    <property type="match status" value="1"/>
</dbReference>
<dbReference type="SMART" id="SM00382">
    <property type="entry name" value="AAA"/>
    <property type="match status" value="2"/>
</dbReference>
<dbReference type="SUPFAM" id="SSF52540">
    <property type="entry name" value="P-loop containing nucleoside triphosphate hydrolases"/>
    <property type="match status" value="2"/>
</dbReference>
<dbReference type="PROSITE" id="PS50893">
    <property type="entry name" value="ABC_TRANSPORTER_2"/>
    <property type="match status" value="2"/>
</dbReference>
<comment type="function">
    <text evidence="1">May be a general defense protein.</text>
</comment>
<comment type="subcellular location">
    <subcellularLocation>
        <location evidence="2">Membrane</location>
        <topology evidence="2">Multi-pass membrane protein</topology>
    </subcellularLocation>
</comment>
<comment type="alternative products">
    <event type="alternative splicing"/>
    <isoform>
        <id>Q5Z9S8-1</id>
        <name>1</name>
        <sequence type="displayed"/>
    </isoform>
    <isoform>
        <id>Q5Z9S8-2</id>
        <name>2</name>
        <sequence type="described" ref="VSP_018394 VSP_018395"/>
    </isoform>
</comment>
<comment type="similarity">
    <text evidence="9">Belongs to the ABC transporter superfamily. ABCG family. PDR (TC 3.A.1.205) subfamily.</text>
</comment>
<proteinExistence type="evidence at transcript level"/>
<gene>
    <name evidence="8" type="primary">ABCG42</name>
    <name evidence="5 7" type="synonym">PDR12</name>
    <name evidence="12" type="ordered locus">Os06g0554800</name>
    <name type="ordered locus">LOC_Os06g36090</name>
    <name evidence="10" type="ORF">P0458E11.3-1</name>
    <name evidence="11" type="ORF">P0458E11.3-2</name>
</gene>
<accession>Q5Z9S8</accession>
<accession>Q0DBK9</accession>
<accession>Q5Z9S7</accession>
<accession>Q8GU93</accession>
<feature type="chain" id="PRO_0000234650" description="ABC transporter G family member 42">
    <location>
        <begin position="1"/>
        <end position="1500"/>
    </location>
</feature>
<feature type="transmembrane region" description="Helical" evidence="2">
    <location>
        <begin position="551"/>
        <end position="571"/>
    </location>
</feature>
<feature type="transmembrane region" description="Helical" evidence="2">
    <location>
        <begin position="584"/>
        <end position="604"/>
    </location>
</feature>
<feature type="transmembrane region" description="Helical" evidence="2">
    <location>
        <begin position="639"/>
        <end position="659"/>
    </location>
</feature>
<feature type="transmembrane region" description="Helical" evidence="2">
    <location>
        <begin position="670"/>
        <end position="690"/>
    </location>
</feature>
<feature type="transmembrane region" description="Helical" evidence="2">
    <location>
        <begin position="695"/>
        <end position="715"/>
    </location>
</feature>
<feature type="transmembrane region" description="Helical" evidence="2">
    <location>
        <begin position="724"/>
        <end position="744"/>
    </location>
</feature>
<feature type="transmembrane region" description="Helical" evidence="2">
    <location>
        <begin position="783"/>
        <end position="803"/>
    </location>
</feature>
<feature type="transmembrane region" description="Helical" evidence="2">
    <location>
        <begin position="1245"/>
        <end position="1265"/>
    </location>
</feature>
<feature type="transmembrane region" description="Helical" evidence="2">
    <location>
        <begin position="1277"/>
        <end position="1297"/>
    </location>
</feature>
<feature type="transmembrane region" description="Helical" evidence="2">
    <location>
        <begin position="1331"/>
        <end position="1351"/>
    </location>
</feature>
<feature type="transmembrane region" description="Helical" evidence="2">
    <location>
        <begin position="1358"/>
        <end position="1378"/>
    </location>
</feature>
<feature type="transmembrane region" description="Helical" evidence="2">
    <location>
        <begin position="1388"/>
        <end position="1408"/>
    </location>
</feature>
<feature type="transmembrane region" description="Helical" evidence="2">
    <location>
        <begin position="1416"/>
        <end position="1436"/>
    </location>
</feature>
<feature type="transmembrane region" description="Helical" evidence="2">
    <location>
        <begin position="1472"/>
        <end position="1492"/>
    </location>
</feature>
<feature type="domain" description="ABC transporter 1" evidence="3">
    <location>
        <begin position="182"/>
        <end position="455"/>
    </location>
</feature>
<feature type="domain" description="ABC transmembrane type-2 1">
    <location>
        <begin position="533"/>
        <end position="746"/>
    </location>
</feature>
<feature type="domain" description="ABC transporter 2" evidence="3">
    <location>
        <begin position="894"/>
        <end position="1151"/>
    </location>
</feature>
<feature type="domain" description="ABC transmembrane type-2 2">
    <location>
        <begin position="1224"/>
        <end position="1438"/>
    </location>
</feature>
<feature type="region of interest" description="Disordered" evidence="4">
    <location>
        <begin position="26"/>
        <end position="56"/>
    </location>
</feature>
<feature type="region of interest" description="Disordered" evidence="4">
    <location>
        <begin position="822"/>
        <end position="850"/>
    </location>
</feature>
<feature type="compositionally biased region" description="Basic and acidic residues" evidence="4">
    <location>
        <begin position="822"/>
        <end position="834"/>
    </location>
</feature>
<feature type="compositionally biased region" description="Polar residues" evidence="4">
    <location>
        <begin position="837"/>
        <end position="846"/>
    </location>
</feature>
<feature type="binding site" evidence="3">
    <location>
        <begin position="215"/>
        <end position="222"/>
    </location>
    <ligand>
        <name>ATP</name>
        <dbReference type="ChEBI" id="CHEBI:30616"/>
        <label>1</label>
    </ligand>
</feature>
<feature type="binding site" evidence="3">
    <location>
        <begin position="939"/>
        <end position="946"/>
    </location>
    <ligand>
        <name>ATP</name>
        <dbReference type="ChEBI" id="CHEBI:30616"/>
        <label>2</label>
    </ligand>
</feature>
<feature type="splice variant" id="VSP_018394" description="In isoform 2." evidence="6">
    <location>
        <begin position="1"/>
        <end position="333"/>
    </location>
</feature>
<feature type="splice variant" id="VSP_018395" description="In isoform 2." evidence="6">
    <original>R</original>
    <variation>M</variation>
    <location>
        <position position="334"/>
    </location>
</feature>
<feature type="sequence conflict" description="In Ref. 1; CAD59565." evidence="9" ref="1">
    <original>S</original>
    <variation>F</variation>
    <location>
        <position position="81"/>
    </location>
</feature>
<reference key="1">
    <citation type="journal article" date="2003" name="Plant Physiol.">
        <title>The ATP-binding cassette transporters: structure, function, and gene family comparison between rice and Arabidopsis.</title>
        <authorList>
            <person name="Jasinski M."/>
            <person name="Ducos E."/>
            <person name="Martinoia E."/>
            <person name="Boutry M."/>
        </authorList>
    </citation>
    <scope>NUCLEOTIDE SEQUENCE [GENOMIC DNA]</scope>
    <source>
        <strain>cv. Nipponbare</strain>
    </source>
</reference>
<reference key="2">
    <citation type="journal article" date="2005" name="Nature">
        <title>The map-based sequence of the rice genome.</title>
        <authorList>
            <consortium name="International rice genome sequencing project (IRGSP)"/>
        </authorList>
    </citation>
    <scope>NUCLEOTIDE SEQUENCE [LARGE SCALE GENOMIC DNA]</scope>
    <source>
        <strain>cv. Nipponbare</strain>
    </source>
</reference>
<reference key="3">
    <citation type="journal article" date="2008" name="Nucleic Acids Res.">
        <title>The rice annotation project database (RAP-DB): 2008 update.</title>
        <authorList>
            <consortium name="The rice annotation project (RAP)"/>
        </authorList>
    </citation>
    <scope>GENOME REANNOTATION</scope>
    <source>
        <strain>cv. Nipponbare</strain>
    </source>
</reference>
<reference key="4">
    <citation type="journal article" date="2013" name="Rice">
        <title>Improvement of the Oryza sativa Nipponbare reference genome using next generation sequence and optical map data.</title>
        <authorList>
            <person name="Kawahara Y."/>
            <person name="de la Bastide M."/>
            <person name="Hamilton J.P."/>
            <person name="Kanamori H."/>
            <person name="McCombie W.R."/>
            <person name="Ouyang S."/>
            <person name="Schwartz D.C."/>
            <person name="Tanaka T."/>
            <person name="Wu J."/>
            <person name="Zhou S."/>
            <person name="Childs K.L."/>
            <person name="Davidson R.M."/>
            <person name="Lin H."/>
            <person name="Quesada-Ocampo L."/>
            <person name="Vaillancourt B."/>
            <person name="Sakai H."/>
            <person name="Lee S.S."/>
            <person name="Kim J."/>
            <person name="Numa H."/>
            <person name="Itoh T."/>
            <person name="Buell C.R."/>
            <person name="Matsumoto T."/>
        </authorList>
    </citation>
    <scope>GENOME REANNOTATION</scope>
    <source>
        <strain>cv. Nipponbare</strain>
    </source>
</reference>
<reference key="5">
    <citation type="journal article" date="2003" name="Science">
        <title>Collection, mapping, and annotation of over 28,000 cDNA clones from japonica rice.</title>
        <authorList>
            <consortium name="The rice full-length cDNA consortium"/>
        </authorList>
    </citation>
    <scope>NUCLEOTIDE SEQUENCE [LARGE SCALE MRNA] (ISOFORM 2)</scope>
    <source>
        <strain>cv. Nipponbare</strain>
    </source>
</reference>
<reference key="6">
    <citation type="journal article" date="2006" name="FEBS Lett.">
        <title>Organization and function of the plant pleiotropic drug resistance ABC transporter family.</title>
        <authorList>
            <person name="Crouzet J."/>
            <person name="Trombik T."/>
            <person name="Fraysse A.S."/>
            <person name="Boutry M."/>
        </authorList>
    </citation>
    <scope>GENE FAMILY</scope>
    <scope>NOMENCLATURE</scope>
</reference>
<reference key="7">
    <citation type="journal article" date="2008" name="Trends Plant Sci.">
        <title>Plant ABC proteins - a unified nomenclature and updated inventory.</title>
        <authorList>
            <person name="Verrier P.J."/>
            <person name="Bird D."/>
            <person name="Burla B."/>
            <person name="Dassa E."/>
            <person name="Forestier C."/>
            <person name="Geisler M."/>
            <person name="Klein M."/>
            <person name="Kolukisaoglu H.U."/>
            <person name="Lee Y."/>
            <person name="Martinoia E."/>
            <person name="Murphy A."/>
            <person name="Rea P.A."/>
            <person name="Samuels L."/>
            <person name="Schulz B."/>
            <person name="Spalding E.J."/>
            <person name="Yazaki K."/>
            <person name="Theodoulou F.L."/>
        </authorList>
    </citation>
    <scope>GENE FAMILY</scope>
    <scope>NOMENCLATURE</scope>
</reference>